<proteinExistence type="predicted"/>
<reference key="1">
    <citation type="journal article" date="2006" name="Mol. Microbiol.">
        <title>Role of pathogenicity island-associated integrases in the genome plasticity of uropathogenic Escherichia coli strain 536.</title>
        <authorList>
            <person name="Hochhut B."/>
            <person name="Wilde C."/>
            <person name="Balling G."/>
            <person name="Middendorf B."/>
            <person name="Dobrindt U."/>
            <person name="Brzuszkiewicz E."/>
            <person name="Gottschalk G."/>
            <person name="Carniel E."/>
            <person name="Hacker J."/>
        </authorList>
    </citation>
    <scope>NUCLEOTIDE SEQUENCE [LARGE SCALE GENOMIC DNA]</scope>
    <source>
        <strain>536 / UPEC</strain>
    </source>
</reference>
<name>YICS_ECOL5</name>
<sequence>MKPTMLLMITVFLIFPAISQAESPFSSLQSAKEKTTVLQDLRKICTPQASLSDEAWEKLMLSDENNKQHIREAIVAMERNNQSNYWEALGKVECPDM</sequence>
<accession>Q0TB41</accession>
<feature type="chain" id="PRO_0000262297" description="Uncharacterized protein YicS">
    <location>
        <begin position="1"/>
        <end position="97"/>
    </location>
</feature>
<organism>
    <name type="scientific">Escherichia coli O6:K15:H31 (strain 536 / UPEC)</name>
    <dbReference type="NCBI Taxonomy" id="362663"/>
    <lineage>
        <taxon>Bacteria</taxon>
        <taxon>Pseudomonadati</taxon>
        <taxon>Pseudomonadota</taxon>
        <taxon>Gammaproteobacteria</taxon>
        <taxon>Enterobacterales</taxon>
        <taxon>Enterobacteriaceae</taxon>
        <taxon>Escherichia</taxon>
    </lineage>
</organism>
<protein>
    <recommendedName>
        <fullName>Uncharacterized protein YicS</fullName>
    </recommendedName>
</protein>
<dbReference type="EMBL" id="CP000247">
    <property type="protein sequence ID" value="ABG71838.1"/>
    <property type="molecule type" value="Genomic_DNA"/>
</dbReference>
<dbReference type="RefSeq" id="WP_001297978.1">
    <property type="nucleotide sequence ID" value="NC_008253.1"/>
</dbReference>
<dbReference type="SMR" id="Q0TB41"/>
<dbReference type="KEGG" id="ecp:ECP_3867"/>
<dbReference type="HOGENOM" id="CLU_159877_2_0_6"/>
<dbReference type="Proteomes" id="UP000009182">
    <property type="component" value="Chromosome"/>
</dbReference>
<dbReference type="InterPro" id="IPR048144">
    <property type="entry name" value="YicS_fam"/>
</dbReference>
<dbReference type="NCBIfam" id="NF041639">
    <property type="entry name" value="YicS_fam"/>
    <property type="match status" value="1"/>
</dbReference>
<gene>
    <name type="primary">yicS</name>
    <name type="ordered locus">ECP_3867</name>
</gene>